<feature type="initiator methionine" description="Removed" evidence="1">
    <location>
        <position position="1"/>
    </location>
</feature>
<feature type="chain" id="PRO_0000126531" description="Small ribosomal subunit protein uS8">
    <location>
        <begin position="2"/>
        <end position="130"/>
    </location>
</feature>
<organism>
    <name type="scientific">Yersinia pestis</name>
    <dbReference type="NCBI Taxonomy" id="632"/>
    <lineage>
        <taxon>Bacteria</taxon>
        <taxon>Pseudomonadati</taxon>
        <taxon>Pseudomonadota</taxon>
        <taxon>Gammaproteobacteria</taxon>
        <taxon>Enterobacterales</taxon>
        <taxon>Yersiniaceae</taxon>
        <taxon>Yersinia</taxon>
    </lineage>
</organism>
<accession>Q8ZJ98</accession>
<accession>Q0WK84</accession>
<reference key="1">
    <citation type="journal article" date="2001" name="Nature">
        <title>Genome sequence of Yersinia pestis, the causative agent of plague.</title>
        <authorList>
            <person name="Parkhill J."/>
            <person name="Wren B.W."/>
            <person name="Thomson N.R."/>
            <person name="Titball R.W."/>
            <person name="Holden M.T.G."/>
            <person name="Prentice M.B."/>
            <person name="Sebaihia M."/>
            <person name="James K.D."/>
            <person name="Churcher C.M."/>
            <person name="Mungall K.L."/>
            <person name="Baker S."/>
            <person name="Basham D."/>
            <person name="Bentley S.D."/>
            <person name="Brooks K."/>
            <person name="Cerdeno-Tarraga A.-M."/>
            <person name="Chillingworth T."/>
            <person name="Cronin A."/>
            <person name="Davies R.M."/>
            <person name="Davis P."/>
            <person name="Dougan G."/>
            <person name="Feltwell T."/>
            <person name="Hamlin N."/>
            <person name="Holroyd S."/>
            <person name="Jagels K."/>
            <person name="Karlyshev A.V."/>
            <person name="Leather S."/>
            <person name="Moule S."/>
            <person name="Oyston P.C.F."/>
            <person name="Quail M.A."/>
            <person name="Rutherford K.M."/>
            <person name="Simmonds M."/>
            <person name="Skelton J."/>
            <person name="Stevens K."/>
            <person name="Whitehead S."/>
            <person name="Barrell B.G."/>
        </authorList>
    </citation>
    <scope>NUCLEOTIDE SEQUENCE [LARGE SCALE GENOMIC DNA]</scope>
    <source>
        <strain>CO-92 / Biovar Orientalis</strain>
    </source>
</reference>
<reference key="2">
    <citation type="journal article" date="2002" name="J. Bacteriol.">
        <title>Genome sequence of Yersinia pestis KIM.</title>
        <authorList>
            <person name="Deng W."/>
            <person name="Burland V."/>
            <person name="Plunkett G. III"/>
            <person name="Boutin A."/>
            <person name="Mayhew G.F."/>
            <person name="Liss P."/>
            <person name="Perna N.T."/>
            <person name="Rose D.J."/>
            <person name="Mau B."/>
            <person name="Zhou S."/>
            <person name="Schwartz D.C."/>
            <person name="Fetherston J.D."/>
            <person name="Lindler L.E."/>
            <person name="Brubaker R.R."/>
            <person name="Plano G.V."/>
            <person name="Straley S.C."/>
            <person name="McDonough K.A."/>
            <person name="Nilles M.L."/>
            <person name="Matson J.S."/>
            <person name="Blattner F.R."/>
            <person name="Perry R.D."/>
        </authorList>
    </citation>
    <scope>NUCLEOTIDE SEQUENCE [LARGE SCALE GENOMIC DNA]</scope>
    <source>
        <strain>KIM10+ / Biovar Mediaevalis</strain>
    </source>
</reference>
<reference key="3">
    <citation type="journal article" date="2004" name="DNA Res.">
        <title>Complete genome sequence of Yersinia pestis strain 91001, an isolate avirulent to humans.</title>
        <authorList>
            <person name="Song Y."/>
            <person name="Tong Z."/>
            <person name="Wang J."/>
            <person name="Wang L."/>
            <person name="Guo Z."/>
            <person name="Han Y."/>
            <person name="Zhang J."/>
            <person name="Pei D."/>
            <person name="Zhou D."/>
            <person name="Qin H."/>
            <person name="Pang X."/>
            <person name="Han Y."/>
            <person name="Zhai J."/>
            <person name="Li M."/>
            <person name="Cui B."/>
            <person name="Qi Z."/>
            <person name="Jin L."/>
            <person name="Dai R."/>
            <person name="Chen F."/>
            <person name="Li S."/>
            <person name="Ye C."/>
            <person name="Du Z."/>
            <person name="Lin W."/>
            <person name="Wang J."/>
            <person name="Yu J."/>
            <person name="Yang H."/>
            <person name="Wang J."/>
            <person name="Huang P."/>
            <person name="Yang R."/>
        </authorList>
    </citation>
    <scope>NUCLEOTIDE SEQUENCE [LARGE SCALE GENOMIC DNA]</scope>
    <source>
        <strain>91001 / Biovar Mediaevalis</strain>
    </source>
</reference>
<evidence type="ECO:0000250" key="1"/>
<evidence type="ECO:0000255" key="2">
    <source>
        <dbReference type="HAMAP-Rule" id="MF_01302"/>
    </source>
</evidence>
<evidence type="ECO:0000305" key="3"/>
<protein>
    <recommendedName>
        <fullName evidence="2">Small ribosomal subunit protein uS8</fullName>
    </recommendedName>
    <alternativeName>
        <fullName evidence="3">30S ribosomal protein S8</fullName>
    </alternativeName>
</protein>
<dbReference type="EMBL" id="AL590842">
    <property type="protein sequence ID" value="CAL18906.1"/>
    <property type="molecule type" value="Genomic_DNA"/>
</dbReference>
<dbReference type="EMBL" id="AE009952">
    <property type="protein sequence ID" value="AAM87547.1"/>
    <property type="molecule type" value="Genomic_DNA"/>
</dbReference>
<dbReference type="EMBL" id="AE017042">
    <property type="protein sequence ID" value="AAS60497.1"/>
    <property type="molecule type" value="Genomic_DNA"/>
</dbReference>
<dbReference type="PIR" id="AH0027">
    <property type="entry name" value="AH0027"/>
</dbReference>
<dbReference type="RefSeq" id="WP_002213332.1">
    <property type="nucleotide sequence ID" value="NZ_WUCM01000078.1"/>
</dbReference>
<dbReference type="RefSeq" id="YP_002345304.1">
    <property type="nucleotide sequence ID" value="NC_003143.1"/>
</dbReference>
<dbReference type="SMR" id="Q8ZJ98"/>
<dbReference type="STRING" id="214092.YPO0223"/>
<dbReference type="PaxDb" id="214092-YPO0223"/>
<dbReference type="DNASU" id="1148950"/>
<dbReference type="EnsemblBacteria" id="AAS60497">
    <property type="protein sequence ID" value="AAS60497"/>
    <property type="gene ID" value="YP_0221"/>
</dbReference>
<dbReference type="GeneID" id="96663182"/>
<dbReference type="KEGG" id="ype:YPO0223"/>
<dbReference type="KEGG" id="ypk:y4003"/>
<dbReference type="KEGG" id="ypm:YP_0221"/>
<dbReference type="PATRIC" id="fig|214092.21.peg.452"/>
<dbReference type="eggNOG" id="COG0096">
    <property type="taxonomic scope" value="Bacteria"/>
</dbReference>
<dbReference type="HOGENOM" id="CLU_098428_0_0_6"/>
<dbReference type="OMA" id="NSAYHDT"/>
<dbReference type="OrthoDB" id="9802617at2"/>
<dbReference type="Proteomes" id="UP000000815">
    <property type="component" value="Chromosome"/>
</dbReference>
<dbReference type="Proteomes" id="UP000001019">
    <property type="component" value="Chromosome"/>
</dbReference>
<dbReference type="Proteomes" id="UP000002490">
    <property type="component" value="Chromosome"/>
</dbReference>
<dbReference type="GO" id="GO:0022627">
    <property type="term" value="C:cytosolic small ribosomal subunit"/>
    <property type="evidence" value="ECO:0000318"/>
    <property type="project" value="GO_Central"/>
</dbReference>
<dbReference type="GO" id="GO:0019843">
    <property type="term" value="F:rRNA binding"/>
    <property type="evidence" value="ECO:0007669"/>
    <property type="project" value="UniProtKB-UniRule"/>
</dbReference>
<dbReference type="GO" id="GO:0003735">
    <property type="term" value="F:structural constituent of ribosome"/>
    <property type="evidence" value="ECO:0000318"/>
    <property type="project" value="GO_Central"/>
</dbReference>
<dbReference type="GO" id="GO:0006412">
    <property type="term" value="P:translation"/>
    <property type="evidence" value="ECO:0007669"/>
    <property type="project" value="UniProtKB-UniRule"/>
</dbReference>
<dbReference type="FunFam" id="3.30.1370.30:FF:000003">
    <property type="entry name" value="30S ribosomal protein S8"/>
    <property type="match status" value="1"/>
</dbReference>
<dbReference type="FunFam" id="3.30.1490.10:FF:000001">
    <property type="entry name" value="30S ribosomal protein S8"/>
    <property type="match status" value="1"/>
</dbReference>
<dbReference type="Gene3D" id="3.30.1370.30">
    <property type="match status" value="1"/>
</dbReference>
<dbReference type="Gene3D" id="3.30.1490.10">
    <property type="match status" value="1"/>
</dbReference>
<dbReference type="HAMAP" id="MF_01302_B">
    <property type="entry name" value="Ribosomal_uS8_B"/>
    <property type="match status" value="1"/>
</dbReference>
<dbReference type="InterPro" id="IPR000630">
    <property type="entry name" value="Ribosomal_uS8"/>
</dbReference>
<dbReference type="InterPro" id="IPR047863">
    <property type="entry name" value="Ribosomal_uS8_CS"/>
</dbReference>
<dbReference type="InterPro" id="IPR035987">
    <property type="entry name" value="Ribosomal_uS8_sf"/>
</dbReference>
<dbReference type="NCBIfam" id="NF001109">
    <property type="entry name" value="PRK00136.1"/>
    <property type="match status" value="1"/>
</dbReference>
<dbReference type="PANTHER" id="PTHR11758">
    <property type="entry name" value="40S RIBOSOMAL PROTEIN S15A"/>
    <property type="match status" value="1"/>
</dbReference>
<dbReference type="Pfam" id="PF00410">
    <property type="entry name" value="Ribosomal_S8"/>
    <property type="match status" value="1"/>
</dbReference>
<dbReference type="SUPFAM" id="SSF56047">
    <property type="entry name" value="Ribosomal protein S8"/>
    <property type="match status" value="1"/>
</dbReference>
<dbReference type="PROSITE" id="PS00053">
    <property type="entry name" value="RIBOSOMAL_S8"/>
    <property type="match status" value="1"/>
</dbReference>
<sequence>MSMQDPIADMLTRIRNGQAANKVAVTMPSSKLKVAIANVLKEEGFIEDFKIEGDTKPVLELALKYFQGKAVVESIQRISRPGLRIYKKKDELPKVMAGLGIAVISTSKGVMTDRAARQAGLGGEIICYVA</sequence>
<gene>
    <name evidence="2" type="primary">rpsH</name>
    <name type="ordered locus">YPO0223</name>
    <name type="ordered locus">y4003</name>
    <name type="ordered locus">YP_0221</name>
</gene>
<keyword id="KW-1185">Reference proteome</keyword>
<keyword id="KW-0687">Ribonucleoprotein</keyword>
<keyword id="KW-0689">Ribosomal protein</keyword>
<keyword id="KW-0694">RNA-binding</keyword>
<keyword id="KW-0699">rRNA-binding</keyword>
<proteinExistence type="inferred from homology"/>
<name>RS8_YERPE</name>
<comment type="function">
    <text evidence="2">One of the primary rRNA binding proteins, it binds directly to 16S rRNA central domain where it helps coordinate assembly of the platform of the 30S subunit.</text>
</comment>
<comment type="subunit">
    <text evidence="2">Part of the 30S ribosomal subunit. Contacts proteins S5 and S12.</text>
</comment>
<comment type="similarity">
    <text evidence="2">Belongs to the universal ribosomal protein uS8 family.</text>
</comment>